<accession>Q3YED3</accession>
<keyword id="KW-0027">Amidation</keyword>
<keyword id="KW-1015">Disulfide bond</keyword>
<keyword id="KW-0960">Knottin</keyword>
<keyword id="KW-0528">Neurotoxin</keyword>
<keyword id="KW-0964">Secreted</keyword>
<keyword id="KW-0732">Signal</keyword>
<keyword id="KW-0800">Toxin</keyword>
<name>O373_CONLI</name>
<protein>
    <recommendedName>
        <fullName>Conotoxin LiCr173</fullName>
    </recommendedName>
</protein>
<evidence type="ECO:0000250" key="1"/>
<evidence type="ECO:0000255" key="2"/>
<evidence type="ECO:0000269" key="3">
    <source>
    </source>
</evidence>
<evidence type="ECO:0000305" key="4"/>
<comment type="subcellular location">
    <subcellularLocation>
        <location evidence="1">Secreted</location>
    </subcellularLocation>
</comment>
<comment type="tissue specificity">
    <text>Expressed by the venom duct.</text>
</comment>
<comment type="domain">
    <text evidence="1">The presence of a 'disulfide through disulfide knot' structurally defines this protein as a knottin.</text>
</comment>
<comment type="domain">
    <text>The cysteine framework is VI/VII (C-C-CC-C-C).</text>
</comment>
<comment type="similarity">
    <text evidence="4">Belongs to the conotoxin O3 superfamily.</text>
</comment>
<sequence>MSGLGTMVLTLLLLVFMVTSHQDGGKKQATQRNAVNIRRRKSITQRTTDEKCNEYCEERDRNCCGKANGEPRCARMCFG</sequence>
<organism>
    <name type="scientific">Conus lividus</name>
    <name type="common">Livid cone</name>
    <dbReference type="NCBI Taxonomy" id="89426"/>
    <lineage>
        <taxon>Eukaryota</taxon>
        <taxon>Metazoa</taxon>
        <taxon>Spiralia</taxon>
        <taxon>Lophotrochozoa</taxon>
        <taxon>Mollusca</taxon>
        <taxon>Gastropoda</taxon>
        <taxon>Caenogastropoda</taxon>
        <taxon>Neogastropoda</taxon>
        <taxon>Conoidea</taxon>
        <taxon>Conidae</taxon>
        <taxon>Conus</taxon>
        <taxon>Lividoconus</taxon>
    </lineage>
</organism>
<reference key="1">
    <citation type="journal article" date="2006" name="Chem. Biol. Drug Des.">
        <title>Novel O-superfamily conotoxins identified by cDNA cloning from three vermivorous Conus species.</title>
        <authorList>
            <person name="Zhangsun D."/>
            <person name="Luo S."/>
            <person name="Wu Y."/>
            <person name="Zhu X."/>
            <person name="Hu Y."/>
            <person name="Xie L."/>
        </authorList>
    </citation>
    <scope>NUCLEOTIDE SEQUENCE [MRNA]</scope>
    <scope>AMIDATION AT PHE-78</scope>
    <source>
        <tissue>Venom duct</tissue>
    </source>
</reference>
<dbReference type="EMBL" id="DQ141180">
    <property type="protein sequence ID" value="AAZ83779.2"/>
    <property type="molecule type" value="mRNA"/>
</dbReference>
<dbReference type="ConoServer" id="2722">
    <property type="toxin name" value="LiCr173 precursor"/>
</dbReference>
<dbReference type="GO" id="GO:0005576">
    <property type="term" value="C:extracellular region"/>
    <property type="evidence" value="ECO:0007669"/>
    <property type="project" value="UniProtKB-SubCell"/>
</dbReference>
<dbReference type="GO" id="GO:0008200">
    <property type="term" value="F:ion channel inhibitor activity"/>
    <property type="evidence" value="ECO:0007669"/>
    <property type="project" value="InterPro"/>
</dbReference>
<dbReference type="GO" id="GO:0090729">
    <property type="term" value="F:toxin activity"/>
    <property type="evidence" value="ECO:0007669"/>
    <property type="project" value="UniProtKB-KW"/>
</dbReference>
<dbReference type="InterPro" id="IPR004214">
    <property type="entry name" value="Conotoxin"/>
</dbReference>
<dbReference type="Pfam" id="PF02950">
    <property type="entry name" value="Conotoxin"/>
    <property type="match status" value="1"/>
</dbReference>
<proteinExistence type="evidence at protein level"/>
<feature type="signal peptide" evidence="2">
    <location>
        <begin position="1"/>
        <end position="20"/>
    </location>
</feature>
<feature type="propeptide" id="PRO_0000315484" evidence="4">
    <location>
        <begin position="21"/>
        <end position="46"/>
    </location>
</feature>
<feature type="peptide" id="PRO_0000315485" description="Conotoxin LiCr173">
    <location>
        <begin position="47"/>
        <end position="78"/>
    </location>
</feature>
<feature type="modified residue" description="Phenylalanine amide" evidence="3">
    <location>
        <position position="78"/>
    </location>
</feature>
<feature type="disulfide bond" evidence="1">
    <location>
        <begin position="52"/>
        <end position="64"/>
    </location>
</feature>
<feature type="disulfide bond" evidence="1">
    <location>
        <begin position="56"/>
        <end position="73"/>
    </location>
</feature>
<feature type="disulfide bond" evidence="1">
    <location>
        <begin position="63"/>
        <end position="77"/>
    </location>
</feature>